<sequence length="195" mass="21446">MRNAEVSRNTLETKIAVAINLDGTGVSKLNSGVGFFDHMLDQIARHGMMDISVECQGDLHIDAHHTVEDVGIALGQAFSRALGDKKGIRRYAHAYVPLDEALSRVVLDISGRPGLEFNVEFTRARIGEFDVDLVREFFQGFVNHAALTLHVDNLRGKNAHHQAETIFKAFGRALRAAVELDPRMVGIMPSTKGSL</sequence>
<reference key="1">
    <citation type="submission" date="2002-07" db="EMBL/GenBank/DDBJ databases">
        <title>The 3-hexulose-6-phosphate synthase-encoding gene of the obligate methylotroph Aminomonas aminovorus C2A1 is not present on a gene cluster encoding other enzymes of the ribulose monophosphate pathway.</title>
        <authorList>
            <person name="Taylor E.J."/>
            <person name="Smith N.L."/>
            <person name="Colby J."/>
            <person name="Black G.W."/>
        </authorList>
    </citation>
    <scope>NUCLEOTIDE SEQUENCE [GENOMIC DNA]</scope>
    <source>
        <strain>DSM 15625 / NCIMB 11268 / C2A1</strain>
    </source>
</reference>
<comment type="catalytic activity">
    <reaction evidence="1">
        <text>D-erythro-1-(imidazol-4-yl)glycerol 3-phosphate = 3-(imidazol-4-yl)-2-oxopropyl phosphate + H2O</text>
        <dbReference type="Rhea" id="RHEA:11040"/>
        <dbReference type="ChEBI" id="CHEBI:15377"/>
        <dbReference type="ChEBI" id="CHEBI:57766"/>
        <dbReference type="ChEBI" id="CHEBI:58278"/>
        <dbReference type="EC" id="4.2.1.19"/>
    </reaction>
</comment>
<comment type="pathway">
    <text evidence="1">Amino-acid biosynthesis; L-histidine biosynthesis; L-histidine from 5-phospho-alpha-D-ribose 1-diphosphate: step 6/9.</text>
</comment>
<comment type="subcellular location">
    <subcellularLocation>
        <location evidence="1">Cytoplasm</location>
    </subcellularLocation>
</comment>
<comment type="similarity">
    <text evidence="1">Belongs to the imidazoleglycerol-phosphate dehydratase family.</text>
</comment>
<dbReference type="EC" id="4.2.1.19" evidence="1"/>
<dbReference type="EMBL" id="AF294615">
    <property type="protein sequence ID" value="AAM88572.1"/>
    <property type="molecule type" value="Genomic_DNA"/>
</dbReference>
<dbReference type="SMR" id="Q8KY27"/>
<dbReference type="UniPathway" id="UPA00031">
    <property type="reaction ID" value="UER00011"/>
</dbReference>
<dbReference type="GO" id="GO:0005737">
    <property type="term" value="C:cytoplasm"/>
    <property type="evidence" value="ECO:0007669"/>
    <property type="project" value="UniProtKB-SubCell"/>
</dbReference>
<dbReference type="GO" id="GO:0004424">
    <property type="term" value="F:imidazoleglycerol-phosphate dehydratase activity"/>
    <property type="evidence" value="ECO:0007669"/>
    <property type="project" value="UniProtKB-UniRule"/>
</dbReference>
<dbReference type="GO" id="GO:0000105">
    <property type="term" value="P:L-histidine biosynthetic process"/>
    <property type="evidence" value="ECO:0007669"/>
    <property type="project" value="UniProtKB-UniRule"/>
</dbReference>
<dbReference type="CDD" id="cd07914">
    <property type="entry name" value="IGPD"/>
    <property type="match status" value="1"/>
</dbReference>
<dbReference type="FunFam" id="3.30.230.40:FF:000002">
    <property type="entry name" value="Imidazoleglycerol-phosphate dehydratase"/>
    <property type="match status" value="1"/>
</dbReference>
<dbReference type="FunFam" id="3.30.230.40:FF:000003">
    <property type="entry name" value="Imidazoleglycerol-phosphate dehydratase HisB"/>
    <property type="match status" value="1"/>
</dbReference>
<dbReference type="Gene3D" id="3.30.230.40">
    <property type="entry name" value="Imidazole glycerol phosphate dehydratase, domain 1"/>
    <property type="match status" value="2"/>
</dbReference>
<dbReference type="HAMAP" id="MF_00076">
    <property type="entry name" value="HisB"/>
    <property type="match status" value="1"/>
</dbReference>
<dbReference type="InterPro" id="IPR038494">
    <property type="entry name" value="IGPD_sf"/>
</dbReference>
<dbReference type="InterPro" id="IPR000807">
    <property type="entry name" value="ImidazoleglycerolP_deHydtase"/>
</dbReference>
<dbReference type="InterPro" id="IPR020565">
    <property type="entry name" value="ImidazoleglycerP_deHydtase_CS"/>
</dbReference>
<dbReference type="InterPro" id="IPR020568">
    <property type="entry name" value="Ribosomal_Su5_D2-typ_SF"/>
</dbReference>
<dbReference type="NCBIfam" id="NF002106">
    <property type="entry name" value="PRK00951.1-1"/>
    <property type="match status" value="1"/>
</dbReference>
<dbReference type="NCBIfam" id="NF002109">
    <property type="entry name" value="PRK00951.1-5"/>
    <property type="match status" value="1"/>
</dbReference>
<dbReference type="NCBIfam" id="NF002111">
    <property type="entry name" value="PRK00951.2-1"/>
    <property type="match status" value="1"/>
</dbReference>
<dbReference type="NCBIfam" id="NF002114">
    <property type="entry name" value="PRK00951.2-4"/>
    <property type="match status" value="1"/>
</dbReference>
<dbReference type="NCBIfam" id="NF002116">
    <property type="entry name" value="PRK00951.2-6"/>
    <property type="match status" value="1"/>
</dbReference>
<dbReference type="PANTHER" id="PTHR23133:SF2">
    <property type="entry name" value="IMIDAZOLEGLYCEROL-PHOSPHATE DEHYDRATASE"/>
    <property type="match status" value="1"/>
</dbReference>
<dbReference type="PANTHER" id="PTHR23133">
    <property type="entry name" value="IMIDAZOLEGLYCEROL-PHOSPHATE DEHYDRATASE HIS7"/>
    <property type="match status" value="1"/>
</dbReference>
<dbReference type="Pfam" id="PF00475">
    <property type="entry name" value="IGPD"/>
    <property type="match status" value="1"/>
</dbReference>
<dbReference type="SUPFAM" id="SSF54211">
    <property type="entry name" value="Ribosomal protein S5 domain 2-like"/>
    <property type="match status" value="2"/>
</dbReference>
<dbReference type="PROSITE" id="PS00954">
    <property type="entry name" value="IGP_DEHYDRATASE_1"/>
    <property type="match status" value="1"/>
</dbReference>
<dbReference type="PROSITE" id="PS00955">
    <property type="entry name" value="IGP_DEHYDRATASE_2"/>
    <property type="match status" value="1"/>
</dbReference>
<feature type="chain" id="PRO_0000158098" description="Imidazoleglycerol-phosphate dehydratase">
    <location>
        <begin position="1"/>
        <end position="195"/>
    </location>
</feature>
<organism>
    <name type="scientific">Aminomonas aminovorus</name>
    <dbReference type="NCBI Taxonomy" id="135579"/>
    <lineage>
        <taxon>Bacteria</taxon>
        <taxon>Pseudomonadati</taxon>
        <taxon>Pseudomonadota</taxon>
    </lineage>
</organism>
<proteinExistence type="inferred from homology"/>
<keyword id="KW-0028">Amino-acid biosynthesis</keyword>
<keyword id="KW-0963">Cytoplasm</keyword>
<keyword id="KW-0368">Histidine biosynthesis</keyword>
<keyword id="KW-0456">Lyase</keyword>
<evidence type="ECO:0000255" key="1">
    <source>
        <dbReference type="HAMAP-Rule" id="MF_00076"/>
    </source>
</evidence>
<protein>
    <recommendedName>
        <fullName evidence="1">Imidazoleglycerol-phosphate dehydratase</fullName>
        <shortName evidence="1">IGPD</shortName>
        <ecNumber evidence="1">4.2.1.19</ecNumber>
    </recommendedName>
</protein>
<accession>Q8KY27</accession>
<gene>
    <name evidence="1" type="primary">hisB</name>
</gene>
<name>HIS7_AMIAM</name>